<name>RECX_STRP2</name>
<proteinExistence type="inferred from homology"/>
<reference key="1">
    <citation type="journal article" date="2007" name="J. Bacteriol.">
        <title>Genome sequence of Avery's virulent serotype 2 strain D39 of Streptococcus pneumoniae and comparison with that of unencapsulated laboratory strain R6.</title>
        <authorList>
            <person name="Lanie J.A."/>
            <person name="Ng W.-L."/>
            <person name="Kazmierczak K.M."/>
            <person name="Andrzejewski T.M."/>
            <person name="Davidsen T.M."/>
            <person name="Wayne K.J."/>
            <person name="Tettelin H."/>
            <person name="Glass J.I."/>
            <person name="Winkler M.E."/>
        </authorList>
    </citation>
    <scope>NUCLEOTIDE SEQUENCE [LARGE SCALE GENOMIC DNA]</scope>
    <source>
        <strain>D39 / NCTC 7466</strain>
    </source>
</reference>
<gene>
    <name evidence="1" type="primary">recX</name>
    <name type="ordered locus">SPD_1705</name>
</gene>
<protein>
    <recommendedName>
        <fullName evidence="1">Regulatory protein RecX</fullName>
    </recommendedName>
</protein>
<keyword id="KW-0963">Cytoplasm</keyword>
<keyword id="KW-1185">Reference proteome</keyword>
<dbReference type="EMBL" id="CP000410">
    <property type="protein sequence ID" value="ABJ54577.1"/>
    <property type="molecule type" value="Genomic_DNA"/>
</dbReference>
<dbReference type="RefSeq" id="WP_000705097.1">
    <property type="nucleotide sequence ID" value="NZ_JAMLJR010000029.1"/>
</dbReference>
<dbReference type="SMR" id="Q04IQ7"/>
<dbReference type="PaxDb" id="373153-SPD_1705"/>
<dbReference type="KEGG" id="spd:SPD_1705"/>
<dbReference type="eggNOG" id="COG2137">
    <property type="taxonomic scope" value="Bacteria"/>
</dbReference>
<dbReference type="HOGENOM" id="CLU_066607_4_0_9"/>
<dbReference type="BioCyc" id="SPNE373153:G1G6V-1841-MONOMER"/>
<dbReference type="Proteomes" id="UP000001452">
    <property type="component" value="Chromosome"/>
</dbReference>
<dbReference type="GO" id="GO:0005737">
    <property type="term" value="C:cytoplasm"/>
    <property type="evidence" value="ECO:0007669"/>
    <property type="project" value="UniProtKB-SubCell"/>
</dbReference>
<dbReference type="GO" id="GO:0006282">
    <property type="term" value="P:regulation of DNA repair"/>
    <property type="evidence" value="ECO:0007669"/>
    <property type="project" value="UniProtKB-UniRule"/>
</dbReference>
<dbReference type="Gene3D" id="1.10.10.10">
    <property type="entry name" value="Winged helix-like DNA-binding domain superfamily/Winged helix DNA-binding domain"/>
    <property type="match status" value="4"/>
</dbReference>
<dbReference type="HAMAP" id="MF_01114">
    <property type="entry name" value="RecX"/>
    <property type="match status" value="1"/>
</dbReference>
<dbReference type="InterPro" id="IPR053926">
    <property type="entry name" value="RecX_HTH_1st"/>
</dbReference>
<dbReference type="InterPro" id="IPR053924">
    <property type="entry name" value="RecX_HTH_2nd"/>
</dbReference>
<dbReference type="InterPro" id="IPR053925">
    <property type="entry name" value="RecX_HTH_3rd"/>
</dbReference>
<dbReference type="InterPro" id="IPR003783">
    <property type="entry name" value="Regulatory_RecX"/>
</dbReference>
<dbReference type="InterPro" id="IPR036388">
    <property type="entry name" value="WH-like_DNA-bd_sf"/>
</dbReference>
<dbReference type="NCBIfam" id="NF010733">
    <property type="entry name" value="PRK14135.1"/>
    <property type="match status" value="1"/>
</dbReference>
<dbReference type="PANTHER" id="PTHR33602">
    <property type="entry name" value="REGULATORY PROTEIN RECX FAMILY PROTEIN"/>
    <property type="match status" value="1"/>
</dbReference>
<dbReference type="PANTHER" id="PTHR33602:SF1">
    <property type="entry name" value="REGULATORY PROTEIN RECX FAMILY PROTEIN"/>
    <property type="match status" value="1"/>
</dbReference>
<dbReference type="Pfam" id="PF21982">
    <property type="entry name" value="RecX_HTH1"/>
    <property type="match status" value="1"/>
</dbReference>
<dbReference type="Pfam" id="PF02631">
    <property type="entry name" value="RecX_HTH2"/>
    <property type="match status" value="1"/>
</dbReference>
<dbReference type="Pfam" id="PF21981">
    <property type="entry name" value="RecX_HTH3"/>
    <property type="match status" value="1"/>
</dbReference>
<sequence length="258" mass="30209">MKITKLEKKKRLYLMELDNGDKCYITEDTIVRFMLSRDKVISEEELKEIQDFAQFSYGKNLALYHLSFKARTEKEVREYLKKYDIDKNIVSQVIANLKEDKWINDGQYAYAIINTNQLSGDKGPYVLTQKLAQKGISKSTIEENLKEFDFSEVAQRVANKLLKKYEGKLPARALQDKIIQNLTNKGFSYSDAKIAFDDLDSQVDQETTQELIFKELDKQYTKYARKYEGYELKQRLTQVLARKGYDFSDIASALREYL</sequence>
<evidence type="ECO:0000255" key="1">
    <source>
        <dbReference type="HAMAP-Rule" id="MF_01114"/>
    </source>
</evidence>
<accession>Q04IQ7</accession>
<comment type="function">
    <text evidence="1">Modulates RecA activity.</text>
</comment>
<comment type="subcellular location">
    <subcellularLocation>
        <location evidence="1">Cytoplasm</location>
    </subcellularLocation>
</comment>
<comment type="similarity">
    <text evidence="1">Belongs to the RecX family.</text>
</comment>
<organism>
    <name type="scientific">Streptococcus pneumoniae serotype 2 (strain D39 / NCTC 7466)</name>
    <dbReference type="NCBI Taxonomy" id="373153"/>
    <lineage>
        <taxon>Bacteria</taxon>
        <taxon>Bacillati</taxon>
        <taxon>Bacillota</taxon>
        <taxon>Bacilli</taxon>
        <taxon>Lactobacillales</taxon>
        <taxon>Streptococcaceae</taxon>
        <taxon>Streptococcus</taxon>
    </lineage>
</organism>
<feature type="chain" id="PRO_1000065215" description="Regulatory protein RecX">
    <location>
        <begin position="1"/>
        <end position="258"/>
    </location>
</feature>